<accession>Q8Y4F5</accession>
<sequence>MKDKFELVSKYSPQGDQPRAIEQLVAGLKKGLKHQTLLGATGTGKTFTVSNVIQEVNKPTLVMAHNKTLAGQLYSEFKEFFPNNAVEYFVSYYDYYQPEAYVPQSDTYIEKDASINDEIDKLRHSATAALFERRDVIIIASVSCIYGLGSPIEYGEMLVSLRVGMEISRDQLLRKLVDIQYDRNDIDFQRGRFRVRGDVVEIFPASRDEHCMRIEFFGDEIERIREVDALTGEIIGEREHVSIFPASHFVTRPDIMKKAIVNIKAELEDRLKVLRADNKLLEAQRLEQRTNYDLEMMEEMGYCSGIENYSRHLSLRPAGVTPYTLLDYFPDDFQMVIDESHVTMPQIRGMFNGDQARKQMLVDHGFRLPSALDNRPLRLEEFEKHINQIMFISATPGPYELEKNPDVIEQIIRPTGLLDPIVEIRPIQGQIDDLMDEINDRVEKNERVLITTLTKKMSEDLTNYLKEAGVKVQYLHSEVKTLERIEIIRDLRLGVYDVIVGINLLREGIDLPEVSLVAILDADKEGFLRSERSLIQTMGRAARNENGRVIMYADKMTDSMRNSIGETERRRKIQIEYNEKHGITPKTIKKEIRGIIAATSAADEREAVKQHDLSKMSKKERDVFIEGMEHEMKEAAKALDFERAAELRDALLEIKAEG</sequence>
<keyword id="KW-0067">ATP-binding</keyword>
<keyword id="KW-0963">Cytoplasm</keyword>
<keyword id="KW-0227">DNA damage</keyword>
<keyword id="KW-0228">DNA excision</keyword>
<keyword id="KW-0234">DNA repair</keyword>
<keyword id="KW-0267">Excision nuclease</keyword>
<keyword id="KW-0547">Nucleotide-binding</keyword>
<keyword id="KW-1185">Reference proteome</keyword>
<keyword id="KW-0742">SOS response</keyword>
<dbReference type="EMBL" id="AL591983">
    <property type="protein sequence ID" value="CAD00567.1"/>
    <property type="molecule type" value="Genomic_DNA"/>
</dbReference>
<dbReference type="PIR" id="AI1385">
    <property type="entry name" value="AI1385"/>
</dbReference>
<dbReference type="RefSeq" id="NP_466012.1">
    <property type="nucleotide sequence ID" value="NC_003210.1"/>
</dbReference>
<dbReference type="RefSeq" id="WP_003722621.1">
    <property type="nucleotide sequence ID" value="NZ_CP149495.1"/>
</dbReference>
<dbReference type="SMR" id="Q8Y4F5"/>
<dbReference type="STRING" id="169963.gene:17595200"/>
<dbReference type="PaxDb" id="169963-lmo2489"/>
<dbReference type="EnsemblBacteria" id="CAD00567">
    <property type="protein sequence ID" value="CAD00567"/>
    <property type="gene ID" value="CAD00567"/>
</dbReference>
<dbReference type="GeneID" id="61190356"/>
<dbReference type="GeneID" id="987319"/>
<dbReference type="KEGG" id="lmo:lmo2489"/>
<dbReference type="PATRIC" id="fig|169963.11.peg.2549"/>
<dbReference type="eggNOG" id="COG0556">
    <property type="taxonomic scope" value="Bacteria"/>
</dbReference>
<dbReference type="HOGENOM" id="CLU_009621_2_1_9"/>
<dbReference type="OrthoDB" id="9806651at2"/>
<dbReference type="PhylomeDB" id="Q8Y4F5"/>
<dbReference type="BioCyc" id="LMON169963:LMO2489-MONOMER"/>
<dbReference type="Proteomes" id="UP000000817">
    <property type="component" value="Chromosome"/>
</dbReference>
<dbReference type="GO" id="GO:0005737">
    <property type="term" value="C:cytoplasm"/>
    <property type="evidence" value="ECO:0007669"/>
    <property type="project" value="UniProtKB-SubCell"/>
</dbReference>
<dbReference type="GO" id="GO:0009380">
    <property type="term" value="C:excinuclease repair complex"/>
    <property type="evidence" value="ECO:0000318"/>
    <property type="project" value="GO_Central"/>
</dbReference>
<dbReference type="GO" id="GO:0005524">
    <property type="term" value="F:ATP binding"/>
    <property type="evidence" value="ECO:0007669"/>
    <property type="project" value="UniProtKB-UniRule"/>
</dbReference>
<dbReference type="GO" id="GO:0016887">
    <property type="term" value="F:ATP hydrolysis activity"/>
    <property type="evidence" value="ECO:0007669"/>
    <property type="project" value="InterPro"/>
</dbReference>
<dbReference type="GO" id="GO:0003677">
    <property type="term" value="F:DNA binding"/>
    <property type="evidence" value="ECO:0007669"/>
    <property type="project" value="UniProtKB-UniRule"/>
</dbReference>
<dbReference type="GO" id="GO:0009381">
    <property type="term" value="F:excinuclease ABC activity"/>
    <property type="evidence" value="ECO:0007669"/>
    <property type="project" value="UniProtKB-UniRule"/>
</dbReference>
<dbReference type="GO" id="GO:0000715">
    <property type="term" value="P:nucleotide-excision repair, DNA damage recognition"/>
    <property type="evidence" value="ECO:0000318"/>
    <property type="project" value="GO_Central"/>
</dbReference>
<dbReference type="GO" id="GO:0009432">
    <property type="term" value="P:SOS response"/>
    <property type="evidence" value="ECO:0007669"/>
    <property type="project" value="UniProtKB-UniRule"/>
</dbReference>
<dbReference type="CDD" id="cd17916">
    <property type="entry name" value="DEXHc_UvrB"/>
    <property type="match status" value="1"/>
</dbReference>
<dbReference type="CDD" id="cd18790">
    <property type="entry name" value="SF2_C_UvrB"/>
    <property type="match status" value="1"/>
</dbReference>
<dbReference type="Gene3D" id="6.10.140.240">
    <property type="match status" value="1"/>
</dbReference>
<dbReference type="Gene3D" id="3.40.50.300">
    <property type="entry name" value="P-loop containing nucleotide triphosphate hydrolases"/>
    <property type="match status" value="3"/>
</dbReference>
<dbReference type="Gene3D" id="4.10.860.10">
    <property type="entry name" value="UVR domain"/>
    <property type="match status" value="1"/>
</dbReference>
<dbReference type="HAMAP" id="MF_00204">
    <property type="entry name" value="UvrB"/>
    <property type="match status" value="1"/>
</dbReference>
<dbReference type="InterPro" id="IPR006935">
    <property type="entry name" value="Helicase/UvrB_N"/>
</dbReference>
<dbReference type="InterPro" id="IPR014001">
    <property type="entry name" value="Helicase_ATP-bd"/>
</dbReference>
<dbReference type="InterPro" id="IPR001650">
    <property type="entry name" value="Helicase_C-like"/>
</dbReference>
<dbReference type="InterPro" id="IPR027417">
    <property type="entry name" value="P-loop_NTPase"/>
</dbReference>
<dbReference type="InterPro" id="IPR001943">
    <property type="entry name" value="UVR_dom"/>
</dbReference>
<dbReference type="InterPro" id="IPR036876">
    <property type="entry name" value="UVR_dom_sf"/>
</dbReference>
<dbReference type="InterPro" id="IPR004807">
    <property type="entry name" value="UvrB"/>
</dbReference>
<dbReference type="InterPro" id="IPR041471">
    <property type="entry name" value="UvrB_inter"/>
</dbReference>
<dbReference type="InterPro" id="IPR024759">
    <property type="entry name" value="UvrB_YAD/RRR_dom"/>
</dbReference>
<dbReference type="NCBIfam" id="NF003673">
    <property type="entry name" value="PRK05298.1"/>
    <property type="match status" value="1"/>
</dbReference>
<dbReference type="NCBIfam" id="TIGR00631">
    <property type="entry name" value="uvrb"/>
    <property type="match status" value="1"/>
</dbReference>
<dbReference type="PANTHER" id="PTHR24029">
    <property type="entry name" value="UVRABC SYSTEM PROTEIN B"/>
    <property type="match status" value="1"/>
</dbReference>
<dbReference type="PANTHER" id="PTHR24029:SF0">
    <property type="entry name" value="UVRABC SYSTEM PROTEIN B"/>
    <property type="match status" value="1"/>
</dbReference>
<dbReference type="Pfam" id="PF00271">
    <property type="entry name" value="Helicase_C"/>
    <property type="match status" value="1"/>
</dbReference>
<dbReference type="Pfam" id="PF04851">
    <property type="entry name" value="ResIII"/>
    <property type="match status" value="1"/>
</dbReference>
<dbReference type="Pfam" id="PF02151">
    <property type="entry name" value="UVR"/>
    <property type="match status" value="1"/>
</dbReference>
<dbReference type="Pfam" id="PF12344">
    <property type="entry name" value="UvrB"/>
    <property type="match status" value="1"/>
</dbReference>
<dbReference type="Pfam" id="PF17757">
    <property type="entry name" value="UvrB_inter"/>
    <property type="match status" value="1"/>
</dbReference>
<dbReference type="SMART" id="SM00487">
    <property type="entry name" value="DEXDc"/>
    <property type="match status" value="1"/>
</dbReference>
<dbReference type="SMART" id="SM00490">
    <property type="entry name" value="HELICc"/>
    <property type="match status" value="1"/>
</dbReference>
<dbReference type="SUPFAM" id="SSF46600">
    <property type="entry name" value="C-terminal UvrC-binding domain of UvrB"/>
    <property type="match status" value="1"/>
</dbReference>
<dbReference type="SUPFAM" id="SSF52540">
    <property type="entry name" value="P-loop containing nucleoside triphosphate hydrolases"/>
    <property type="match status" value="2"/>
</dbReference>
<dbReference type="PROSITE" id="PS51192">
    <property type="entry name" value="HELICASE_ATP_BIND_1"/>
    <property type="match status" value="1"/>
</dbReference>
<dbReference type="PROSITE" id="PS51194">
    <property type="entry name" value="HELICASE_CTER"/>
    <property type="match status" value="1"/>
</dbReference>
<dbReference type="PROSITE" id="PS50151">
    <property type="entry name" value="UVR"/>
    <property type="match status" value="1"/>
</dbReference>
<proteinExistence type="inferred from homology"/>
<organism>
    <name type="scientific">Listeria monocytogenes serovar 1/2a (strain ATCC BAA-679 / EGD-e)</name>
    <dbReference type="NCBI Taxonomy" id="169963"/>
    <lineage>
        <taxon>Bacteria</taxon>
        <taxon>Bacillati</taxon>
        <taxon>Bacillota</taxon>
        <taxon>Bacilli</taxon>
        <taxon>Bacillales</taxon>
        <taxon>Listeriaceae</taxon>
        <taxon>Listeria</taxon>
    </lineage>
</organism>
<evidence type="ECO:0000255" key="1">
    <source>
        <dbReference type="HAMAP-Rule" id="MF_00204"/>
    </source>
</evidence>
<reference key="1">
    <citation type="journal article" date="2001" name="Science">
        <title>Comparative genomics of Listeria species.</title>
        <authorList>
            <person name="Glaser P."/>
            <person name="Frangeul L."/>
            <person name="Buchrieser C."/>
            <person name="Rusniok C."/>
            <person name="Amend A."/>
            <person name="Baquero F."/>
            <person name="Berche P."/>
            <person name="Bloecker H."/>
            <person name="Brandt P."/>
            <person name="Chakraborty T."/>
            <person name="Charbit A."/>
            <person name="Chetouani F."/>
            <person name="Couve E."/>
            <person name="de Daruvar A."/>
            <person name="Dehoux P."/>
            <person name="Domann E."/>
            <person name="Dominguez-Bernal G."/>
            <person name="Duchaud E."/>
            <person name="Durant L."/>
            <person name="Dussurget O."/>
            <person name="Entian K.-D."/>
            <person name="Fsihi H."/>
            <person name="Garcia-del Portillo F."/>
            <person name="Garrido P."/>
            <person name="Gautier L."/>
            <person name="Goebel W."/>
            <person name="Gomez-Lopez N."/>
            <person name="Hain T."/>
            <person name="Hauf J."/>
            <person name="Jackson D."/>
            <person name="Jones L.-M."/>
            <person name="Kaerst U."/>
            <person name="Kreft J."/>
            <person name="Kuhn M."/>
            <person name="Kunst F."/>
            <person name="Kurapkat G."/>
            <person name="Madueno E."/>
            <person name="Maitournam A."/>
            <person name="Mata Vicente J."/>
            <person name="Ng E."/>
            <person name="Nedjari H."/>
            <person name="Nordsiek G."/>
            <person name="Novella S."/>
            <person name="de Pablos B."/>
            <person name="Perez-Diaz J.-C."/>
            <person name="Purcell R."/>
            <person name="Remmel B."/>
            <person name="Rose M."/>
            <person name="Schlueter T."/>
            <person name="Simoes N."/>
            <person name="Tierrez A."/>
            <person name="Vazquez-Boland J.-A."/>
            <person name="Voss H."/>
            <person name="Wehland J."/>
            <person name="Cossart P."/>
        </authorList>
    </citation>
    <scope>NUCLEOTIDE SEQUENCE [LARGE SCALE GENOMIC DNA]</scope>
    <source>
        <strain>ATCC BAA-679 / EGD-e</strain>
    </source>
</reference>
<comment type="function">
    <text evidence="1">The UvrABC repair system catalyzes the recognition and processing of DNA lesions. A damage recognition complex composed of 2 UvrA and 2 UvrB subunits scans DNA for abnormalities. Upon binding of the UvrA(2)B(2) complex to a putative damaged site, the DNA wraps around one UvrB monomer. DNA wrap is dependent on ATP binding by UvrB and probably causes local melting of the DNA helix, facilitating insertion of UvrB beta-hairpin between the DNA strands. Then UvrB probes one DNA strand for the presence of a lesion. If a lesion is found the UvrA subunits dissociate and the UvrB-DNA preincision complex is formed. This complex is subsequently bound by UvrC and the second UvrB is released. If no lesion is found, the DNA wraps around the other UvrB subunit that will check the other stand for damage.</text>
</comment>
<comment type="subunit">
    <text evidence="1">Forms a heterotetramer with UvrA during the search for lesions. Interacts with UvrC in an incision complex.</text>
</comment>
<comment type="subcellular location">
    <subcellularLocation>
        <location evidence="1">Cytoplasm</location>
    </subcellularLocation>
</comment>
<comment type="domain">
    <text evidence="1">The beta-hairpin motif is involved in DNA binding.</text>
</comment>
<comment type="similarity">
    <text evidence="1">Belongs to the UvrB family.</text>
</comment>
<protein>
    <recommendedName>
        <fullName evidence="1">UvrABC system protein B</fullName>
        <shortName evidence="1">Protein UvrB</shortName>
    </recommendedName>
    <alternativeName>
        <fullName evidence="1">Excinuclease ABC subunit B</fullName>
    </alternativeName>
</protein>
<feature type="chain" id="PRO_0000138405" description="UvrABC system protein B">
    <location>
        <begin position="1"/>
        <end position="658"/>
    </location>
</feature>
<feature type="domain" description="Helicase ATP-binding" evidence="1">
    <location>
        <begin position="26"/>
        <end position="414"/>
    </location>
</feature>
<feature type="domain" description="Helicase C-terminal" evidence="1">
    <location>
        <begin position="430"/>
        <end position="592"/>
    </location>
</feature>
<feature type="domain" description="UVR" evidence="1">
    <location>
        <begin position="622"/>
        <end position="658"/>
    </location>
</feature>
<feature type="short sequence motif" description="Beta-hairpin">
    <location>
        <begin position="92"/>
        <end position="115"/>
    </location>
</feature>
<feature type="binding site" evidence="1">
    <location>
        <begin position="39"/>
        <end position="46"/>
    </location>
    <ligand>
        <name>ATP</name>
        <dbReference type="ChEBI" id="CHEBI:30616"/>
    </ligand>
</feature>
<name>UVRB_LISMO</name>
<gene>
    <name evidence="1" type="primary">uvrB</name>
    <name type="ordered locus">lmo2489</name>
</gene>